<accession>P27587</accession>
<comment type="function">
    <text>Vitellogenin is the major yolk protein of eggs where it is used as a food source during embryogenesis.</text>
</comment>
<comment type="subcellular location">
    <subcellularLocation>
        <location>Secreted</location>
    </subcellularLocation>
</comment>
<comment type="tissue specificity">
    <text>Synthesized in the fat body and ovarian follicle cells and accumulate in the oocyte.</text>
</comment>
<comment type="induction">
    <text>By beta-ecdysone; in males.</text>
</comment>
<comment type="similarity">
    <text evidence="3">Belongs to the AB hydrolase superfamily. Lipase family.</text>
</comment>
<proteinExistence type="evidence at transcript level"/>
<organism>
    <name type="scientific">Ceratitis capitata</name>
    <name type="common">Mediterranean fruit fly</name>
    <name type="synonym">Tephritis capitata</name>
    <dbReference type="NCBI Taxonomy" id="7213"/>
    <lineage>
        <taxon>Eukaryota</taxon>
        <taxon>Metazoa</taxon>
        <taxon>Ecdysozoa</taxon>
        <taxon>Arthropoda</taxon>
        <taxon>Hexapoda</taxon>
        <taxon>Insecta</taxon>
        <taxon>Pterygota</taxon>
        <taxon>Neoptera</taxon>
        <taxon>Endopterygota</taxon>
        <taxon>Diptera</taxon>
        <taxon>Brachycera</taxon>
        <taxon>Muscomorpha</taxon>
        <taxon>Tephritoidea</taxon>
        <taxon>Tephritidae</taxon>
        <taxon>Ceratitis</taxon>
        <taxon>Ceratitis</taxon>
    </lineage>
</organism>
<evidence type="ECO:0000250" key="1"/>
<evidence type="ECO:0000256" key="2">
    <source>
        <dbReference type="SAM" id="MobiDB-lite"/>
    </source>
</evidence>
<evidence type="ECO:0000305" key="3"/>
<gene>
    <name type="primary">VG2-delta</name>
</gene>
<feature type="signal peptide" evidence="1">
    <location>
        <begin position="1"/>
        <end position="20"/>
    </location>
</feature>
<feature type="chain" id="PRO_0000017818" description="Vitellogenin-2">
    <location>
        <begin position="21"/>
        <end position="422"/>
    </location>
</feature>
<feature type="region of interest" description="Disordered" evidence="2">
    <location>
        <begin position="161"/>
        <end position="191"/>
    </location>
</feature>
<feature type="region of interest" description="Disordered" evidence="2">
    <location>
        <begin position="399"/>
        <end position="422"/>
    </location>
</feature>
<feature type="compositionally biased region" description="Polar residues" evidence="2">
    <location>
        <begin position="180"/>
        <end position="189"/>
    </location>
</feature>
<keyword id="KW-0964">Secreted</keyword>
<keyword id="KW-0732">Signal</keyword>
<dbReference type="EMBL" id="X54662">
    <property type="protein sequence ID" value="CAA38473.1"/>
    <property type="molecule type" value="Genomic_DNA"/>
</dbReference>
<dbReference type="PIR" id="S22888">
    <property type="entry name" value="S22888"/>
</dbReference>
<dbReference type="ESTHER" id="cerca-2vite">
    <property type="family name" value="Yolk-Protein_dipter"/>
</dbReference>
<dbReference type="OrthoDB" id="6770740at2759"/>
<dbReference type="GO" id="GO:0005615">
    <property type="term" value="C:extracellular space"/>
    <property type="evidence" value="ECO:0007669"/>
    <property type="project" value="TreeGrafter"/>
</dbReference>
<dbReference type="GO" id="GO:0016298">
    <property type="term" value="F:lipase activity"/>
    <property type="evidence" value="ECO:0007669"/>
    <property type="project" value="InterPro"/>
</dbReference>
<dbReference type="GO" id="GO:0017171">
    <property type="term" value="F:serine hydrolase activity"/>
    <property type="evidence" value="ECO:0007669"/>
    <property type="project" value="TreeGrafter"/>
</dbReference>
<dbReference type="GO" id="GO:0016042">
    <property type="term" value="P:lipid catabolic process"/>
    <property type="evidence" value="ECO:0007669"/>
    <property type="project" value="TreeGrafter"/>
</dbReference>
<dbReference type="Gene3D" id="3.40.50.1820">
    <property type="entry name" value="alpha/beta hydrolase"/>
    <property type="match status" value="1"/>
</dbReference>
<dbReference type="InterPro" id="IPR029058">
    <property type="entry name" value="AB_hydrolase_fold"/>
</dbReference>
<dbReference type="InterPro" id="IPR013818">
    <property type="entry name" value="Lipase"/>
</dbReference>
<dbReference type="InterPro" id="IPR000734">
    <property type="entry name" value="TAG_lipase"/>
</dbReference>
<dbReference type="PANTHER" id="PTHR11610:SF149">
    <property type="entry name" value="FI01450P-RELATED"/>
    <property type="match status" value="1"/>
</dbReference>
<dbReference type="PANTHER" id="PTHR11610">
    <property type="entry name" value="LIPASE"/>
    <property type="match status" value="1"/>
</dbReference>
<dbReference type="Pfam" id="PF00151">
    <property type="entry name" value="Lipase"/>
    <property type="match status" value="1"/>
</dbReference>
<dbReference type="SUPFAM" id="SSF53474">
    <property type="entry name" value="alpha/beta-Hydrolases"/>
    <property type="match status" value="1"/>
</dbReference>
<reference key="1">
    <citation type="journal article" date="1991" name="Genetics">
        <title>A cluster of vitellogenin genes in the Mediterranean fruit fly Ceratitis capitata: sequence and structural conservation in dipteran yolk proteins and their genes.</title>
        <authorList>
            <person name="Rina M."/>
            <person name="Savakis C."/>
        </authorList>
    </citation>
    <scope>NUCLEOTIDE SEQUENCE [GENOMIC DNA]</scope>
    <source>
        <strain>Benakeion</strain>
    </source>
</reference>
<name>VIT2_CERCA</name>
<protein>
    <recommendedName>
        <fullName>Vitellogenin-2</fullName>
    </recommendedName>
    <alternativeName>
        <fullName>Vitellogenin II</fullName>
    </alternativeName>
    <alternativeName>
        <fullName>Yolk protein 2</fullName>
    </alternativeName>
</protein>
<sequence length="422" mass="45546">MNPLTIFCLVAVLLSAATAHRGSNAIRNNLQPSGXLSPRELEDMPAINEITFEKLQEMPAEEAADLVNKIYHLSQMSRNIEPSYAPSPNQIPAYTYTPTGQRVNFNLNQLVATAQQQPNFGKQEVTVFITGLPNKSSAMLTANQKLVQAYLQAYNGRVQVQGEQGDDSNQDTSSSEESSNRPNGQQPKPNGNLVVIDLGAVIRNFEDLVLLDINRVGAAIGNSLVQLTAQADVPQEVINIVAQGIAAHVAGAAARQYTRQTGNTLRRITAMDPSKIYARKPNTLVGLARGNADFVDAIHTSAYGLGTTTRAGDVDFYPNGPSVNMPGTDDIIEASLRATRYLAETVLPGNDRNFPAVAAESLQQYKNNNGNGRRAYMGIAADYDLEGDYILQVNAKSPFGKSAPAQKQNSYHGIHQGAGRPN</sequence>